<sequence length="310" mass="35523">MLKEKKDKEKNIYMIPKILKSSKSKSILKKPKWLKIKLPSNLKKINKIKKILKKNFLHSVCEEANCPNLPECFNNGTATFMILGSICTRKCPFCAVTKGRAQKIDKNEPKKILDIVIKLKLTYVVLTSVARDDLKDGGAKHFSKCIYEIRKKKNIKVEILVPDFRGKEKIALKIFNKFPPDIFNHNIENVPRLYSLIRPGADYIKSLNLLYQFKKICPNIPTKSGLMLGLGEKKKEIISVLKDLKSVGVSIVTIGQYLQPSKNHLLVQKYITPKEFKNFEYIALSLGFSKVFCGPLVRSSYHADRQYLSF</sequence>
<evidence type="ECO:0000255" key="1">
    <source>
        <dbReference type="HAMAP-Rule" id="MF_00206"/>
    </source>
</evidence>
<evidence type="ECO:0000255" key="2">
    <source>
        <dbReference type="PROSITE-ProRule" id="PRU01266"/>
    </source>
</evidence>
<accession>Q057Q7</accession>
<proteinExistence type="inferred from homology"/>
<dbReference type="EC" id="2.8.1.8" evidence="1"/>
<dbReference type="EMBL" id="CP000263">
    <property type="protein sequence ID" value="ABJ90642.1"/>
    <property type="molecule type" value="Genomic_DNA"/>
</dbReference>
<dbReference type="RefSeq" id="WP_011672561.1">
    <property type="nucleotide sequence ID" value="NC_008513.1"/>
</dbReference>
<dbReference type="SMR" id="Q057Q7"/>
<dbReference type="STRING" id="372461.BCc_170"/>
<dbReference type="KEGG" id="bcc:BCc_170"/>
<dbReference type="eggNOG" id="COG0320">
    <property type="taxonomic scope" value="Bacteria"/>
</dbReference>
<dbReference type="HOGENOM" id="CLU_033144_2_1_6"/>
<dbReference type="OrthoDB" id="9787898at2"/>
<dbReference type="UniPathway" id="UPA00538">
    <property type="reaction ID" value="UER00593"/>
</dbReference>
<dbReference type="Proteomes" id="UP000000669">
    <property type="component" value="Chromosome"/>
</dbReference>
<dbReference type="GO" id="GO:0005737">
    <property type="term" value="C:cytoplasm"/>
    <property type="evidence" value="ECO:0007669"/>
    <property type="project" value="UniProtKB-SubCell"/>
</dbReference>
<dbReference type="GO" id="GO:0051539">
    <property type="term" value="F:4 iron, 4 sulfur cluster binding"/>
    <property type="evidence" value="ECO:0007669"/>
    <property type="project" value="UniProtKB-UniRule"/>
</dbReference>
<dbReference type="GO" id="GO:0016992">
    <property type="term" value="F:lipoate synthase activity"/>
    <property type="evidence" value="ECO:0007669"/>
    <property type="project" value="UniProtKB-UniRule"/>
</dbReference>
<dbReference type="GO" id="GO:0046872">
    <property type="term" value="F:metal ion binding"/>
    <property type="evidence" value="ECO:0007669"/>
    <property type="project" value="UniProtKB-KW"/>
</dbReference>
<dbReference type="FunFam" id="3.20.20.70:FF:000040">
    <property type="entry name" value="Lipoyl synthase"/>
    <property type="match status" value="1"/>
</dbReference>
<dbReference type="Gene3D" id="3.20.20.70">
    <property type="entry name" value="Aldolase class I"/>
    <property type="match status" value="1"/>
</dbReference>
<dbReference type="HAMAP" id="MF_00206">
    <property type="entry name" value="Lipoyl_synth"/>
    <property type="match status" value="1"/>
</dbReference>
<dbReference type="InterPro" id="IPR013785">
    <property type="entry name" value="Aldolase_TIM"/>
</dbReference>
<dbReference type="InterPro" id="IPR006638">
    <property type="entry name" value="Elp3/MiaA/NifB-like_rSAM"/>
</dbReference>
<dbReference type="InterPro" id="IPR031691">
    <property type="entry name" value="LIAS_N"/>
</dbReference>
<dbReference type="InterPro" id="IPR003698">
    <property type="entry name" value="Lipoyl_synth"/>
</dbReference>
<dbReference type="InterPro" id="IPR007197">
    <property type="entry name" value="rSAM"/>
</dbReference>
<dbReference type="NCBIfam" id="TIGR00510">
    <property type="entry name" value="lipA"/>
    <property type="match status" value="1"/>
</dbReference>
<dbReference type="NCBIfam" id="NF004019">
    <property type="entry name" value="PRK05481.1"/>
    <property type="match status" value="1"/>
</dbReference>
<dbReference type="NCBIfam" id="NF009544">
    <property type="entry name" value="PRK12928.1"/>
    <property type="match status" value="1"/>
</dbReference>
<dbReference type="PANTHER" id="PTHR10949">
    <property type="entry name" value="LIPOYL SYNTHASE"/>
    <property type="match status" value="1"/>
</dbReference>
<dbReference type="PANTHER" id="PTHR10949:SF0">
    <property type="entry name" value="LIPOYL SYNTHASE, MITOCHONDRIAL"/>
    <property type="match status" value="1"/>
</dbReference>
<dbReference type="Pfam" id="PF16881">
    <property type="entry name" value="LIAS_N"/>
    <property type="match status" value="1"/>
</dbReference>
<dbReference type="Pfam" id="PF04055">
    <property type="entry name" value="Radical_SAM"/>
    <property type="match status" value="1"/>
</dbReference>
<dbReference type="PIRSF" id="PIRSF005963">
    <property type="entry name" value="Lipoyl_synth"/>
    <property type="match status" value="1"/>
</dbReference>
<dbReference type="SFLD" id="SFLDF00271">
    <property type="entry name" value="lipoyl_synthase"/>
    <property type="match status" value="1"/>
</dbReference>
<dbReference type="SFLD" id="SFLDS00029">
    <property type="entry name" value="Radical_SAM"/>
    <property type="match status" value="1"/>
</dbReference>
<dbReference type="SMART" id="SM00729">
    <property type="entry name" value="Elp3"/>
    <property type="match status" value="1"/>
</dbReference>
<dbReference type="SUPFAM" id="SSF102114">
    <property type="entry name" value="Radical SAM enzymes"/>
    <property type="match status" value="1"/>
</dbReference>
<dbReference type="PROSITE" id="PS51918">
    <property type="entry name" value="RADICAL_SAM"/>
    <property type="match status" value="1"/>
</dbReference>
<feature type="chain" id="PRO_0000325237" description="Lipoyl synthase">
    <location>
        <begin position="1"/>
        <end position="310"/>
    </location>
</feature>
<feature type="domain" description="Radical SAM core" evidence="2">
    <location>
        <begin position="73"/>
        <end position="289"/>
    </location>
</feature>
<feature type="binding site" evidence="1">
    <location>
        <position position="61"/>
    </location>
    <ligand>
        <name>[4Fe-4S] cluster</name>
        <dbReference type="ChEBI" id="CHEBI:49883"/>
        <label>1</label>
    </ligand>
</feature>
<feature type="binding site" evidence="1">
    <location>
        <position position="66"/>
    </location>
    <ligand>
        <name>[4Fe-4S] cluster</name>
        <dbReference type="ChEBI" id="CHEBI:49883"/>
        <label>1</label>
    </ligand>
</feature>
<feature type="binding site" evidence="1">
    <location>
        <position position="72"/>
    </location>
    <ligand>
        <name>[4Fe-4S] cluster</name>
        <dbReference type="ChEBI" id="CHEBI:49883"/>
        <label>1</label>
    </ligand>
</feature>
<feature type="binding site" evidence="1">
    <location>
        <position position="87"/>
    </location>
    <ligand>
        <name>[4Fe-4S] cluster</name>
        <dbReference type="ChEBI" id="CHEBI:49883"/>
        <label>2</label>
        <note>4Fe-4S-S-AdoMet</note>
    </ligand>
</feature>
<feature type="binding site" evidence="1">
    <location>
        <position position="91"/>
    </location>
    <ligand>
        <name>[4Fe-4S] cluster</name>
        <dbReference type="ChEBI" id="CHEBI:49883"/>
        <label>2</label>
        <note>4Fe-4S-S-AdoMet</note>
    </ligand>
</feature>
<feature type="binding site" evidence="1">
    <location>
        <position position="94"/>
    </location>
    <ligand>
        <name>[4Fe-4S] cluster</name>
        <dbReference type="ChEBI" id="CHEBI:49883"/>
        <label>2</label>
        <note>4Fe-4S-S-AdoMet</note>
    </ligand>
</feature>
<feature type="binding site" evidence="1">
    <location>
        <position position="300"/>
    </location>
    <ligand>
        <name>[4Fe-4S] cluster</name>
        <dbReference type="ChEBI" id="CHEBI:49883"/>
        <label>1</label>
    </ligand>
</feature>
<reference key="1">
    <citation type="journal article" date="2006" name="Science">
        <title>A small microbial genome: the end of a long symbiotic relationship?</title>
        <authorList>
            <person name="Perez-Brocal V."/>
            <person name="Gil R."/>
            <person name="Ramos S."/>
            <person name="Lamelas A."/>
            <person name="Postigo M."/>
            <person name="Michelena J.M."/>
            <person name="Silva F.J."/>
            <person name="Moya A."/>
            <person name="Latorre A."/>
        </authorList>
    </citation>
    <scope>NUCLEOTIDE SEQUENCE [LARGE SCALE GENOMIC DNA]</scope>
    <source>
        <strain>Cc</strain>
    </source>
</reference>
<protein>
    <recommendedName>
        <fullName evidence="1">Lipoyl synthase</fullName>
        <ecNumber evidence="1">2.8.1.8</ecNumber>
    </recommendedName>
    <alternativeName>
        <fullName evidence="1">Lip-syn</fullName>
        <shortName evidence="1">LS</shortName>
    </alternativeName>
    <alternativeName>
        <fullName evidence="1">Lipoate synthase</fullName>
    </alternativeName>
    <alternativeName>
        <fullName evidence="1">Lipoic acid synthase</fullName>
    </alternativeName>
    <alternativeName>
        <fullName evidence="1">Sulfur insertion protein LipA</fullName>
    </alternativeName>
</protein>
<gene>
    <name evidence="1" type="primary">lipA</name>
    <name type="ordered locus">BCc_170</name>
</gene>
<comment type="function">
    <text evidence="1">Catalyzes the radical-mediated insertion of two sulfur atoms into the C-6 and C-8 positions of the octanoyl moiety bound to the lipoyl domains of lipoate-dependent enzymes, thereby converting the octanoylated domains into lipoylated derivatives.</text>
</comment>
<comment type="catalytic activity">
    <reaction evidence="1">
        <text>[[Fe-S] cluster scaffold protein carrying a second [4Fe-4S](2+) cluster] + N(6)-octanoyl-L-lysyl-[protein] + 2 oxidized [2Fe-2S]-[ferredoxin] + 2 S-adenosyl-L-methionine + 4 H(+) = [[Fe-S] cluster scaffold protein] + N(6)-[(R)-dihydrolipoyl]-L-lysyl-[protein] + 4 Fe(3+) + 2 hydrogen sulfide + 2 5'-deoxyadenosine + 2 L-methionine + 2 reduced [2Fe-2S]-[ferredoxin]</text>
        <dbReference type="Rhea" id="RHEA:16585"/>
        <dbReference type="Rhea" id="RHEA-COMP:9928"/>
        <dbReference type="Rhea" id="RHEA-COMP:10000"/>
        <dbReference type="Rhea" id="RHEA-COMP:10001"/>
        <dbReference type="Rhea" id="RHEA-COMP:10475"/>
        <dbReference type="Rhea" id="RHEA-COMP:14568"/>
        <dbReference type="Rhea" id="RHEA-COMP:14569"/>
        <dbReference type="ChEBI" id="CHEBI:15378"/>
        <dbReference type="ChEBI" id="CHEBI:17319"/>
        <dbReference type="ChEBI" id="CHEBI:29034"/>
        <dbReference type="ChEBI" id="CHEBI:29919"/>
        <dbReference type="ChEBI" id="CHEBI:33722"/>
        <dbReference type="ChEBI" id="CHEBI:33737"/>
        <dbReference type="ChEBI" id="CHEBI:33738"/>
        <dbReference type="ChEBI" id="CHEBI:57844"/>
        <dbReference type="ChEBI" id="CHEBI:59789"/>
        <dbReference type="ChEBI" id="CHEBI:78809"/>
        <dbReference type="ChEBI" id="CHEBI:83100"/>
        <dbReference type="EC" id="2.8.1.8"/>
    </reaction>
</comment>
<comment type="cofactor">
    <cofactor evidence="1">
        <name>[4Fe-4S] cluster</name>
        <dbReference type="ChEBI" id="CHEBI:49883"/>
    </cofactor>
    <text evidence="1">Binds 2 [4Fe-4S] clusters per subunit. One cluster is coordinated with 3 cysteines and an exchangeable S-adenosyl-L-methionine.</text>
</comment>
<comment type="pathway">
    <text evidence="1">Protein modification; protein lipoylation via endogenous pathway; protein N(6)-(lipoyl)lysine from octanoyl-[acyl-carrier-protein]: step 2/2.</text>
</comment>
<comment type="subcellular location">
    <subcellularLocation>
        <location evidence="1">Cytoplasm</location>
    </subcellularLocation>
</comment>
<comment type="similarity">
    <text evidence="1">Belongs to the radical SAM superfamily. Lipoyl synthase family.</text>
</comment>
<name>LIPA_BUCCC</name>
<keyword id="KW-0004">4Fe-4S</keyword>
<keyword id="KW-0963">Cytoplasm</keyword>
<keyword id="KW-0408">Iron</keyword>
<keyword id="KW-0411">Iron-sulfur</keyword>
<keyword id="KW-0479">Metal-binding</keyword>
<keyword id="KW-1185">Reference proteome</keyword>
<keyword id="KW-0949">S-adenosyl-L-methionine</keyword>
<keyword id="KW-0808">Transferase</keyword>
<organism>
    <name type="scientific">Buchnera aphidicola subsp. Cinara cedri (strain Cc)</name>
    <dbReference type="NCBI Taxonomy" id="372461"/>
    <lineage>
        <taxon>Bacteria</taxon>
        <taxon>Pseudomonadati</taxon>
        <taxon>Pseudomonadota</taxon>
        <taxon>Gammaproteobacteria</taxon>
        <taxon>Enterobacterales</taxon>
        <taxon>Erwiniaceae</taxon>
        <taxon>Buchnera</taxon>
    </lineage>
</organism>